<keyword id="KW-0472">Membrane</keyword>
<keyword id="KW-1185">Reference proteome</keyword>
<keyword id="KW-0732">Signal</keyword>
<keyword id="KW-0812">Transmembrane</keyword>
<keyword id="KW-1133">Transmembrane helix</keyword>
<accession>Q8C6U2</accession>
<accession>Q8QZS7</accession>
<organism>
    <name type="scientific">Mus musculus</name>
    <name type="common">Mouse</name>
    <dbReference type="NCBI Taxonomy" id="10090"/>
    <lineage>
        <taxon>Eukaryota</taxon>
        <taxon>Metazoa</taxon>
        <taxon>Chordata</taxon>
        <taxon>Craniata</taxon>
        <taxon>Vertebrata</taxon>
        <taxon>Euteleostomi</taxon>
        <taxon>Mammalia</taxon>
        <taxon>Eutheria</taxon>
        <taxon>Euarchontoglires</taxon>
        <taxon>Glires</taxon>
        <taxon>Rodentia</taxon>
        <taxon>Myomorpha</taxon>
        <taxon>Muroidea</taxon>
        <taxon>Muridae</taxon>
        <taxon>Murinae</taxon>
        <taxon>Mus</taxon>
        <taxon>Mus</taxon>
    </lineage>
</organism>
<sequence length="202" mass="22739">MEAGLLWFCNWSTLGVCAALKLPQIYAQLAARSARGISLPSLLLELAGFLVFLRYQHYYGNPLLTYLEYPILIAQDIVLLLFVFHFNGNVKQALPYMAVFVSSWFILSLQKWIIDLAMNLCTVISAASKFAQLQYLWKVQDSGAVSALTWGLSAYTCATRIITTLMTTNDLTILIRFVIMLALNIWVTATVLHYRKSATKAE</sequence>
<evidence type="ECO:0000255" key="1"/>
<evidence type="ECO:0000305" key="2"/>
<name>S66A3_MOUSE</name>
<reference key="1">
    <citation type="journal article" date="2005" name="Science">
        <title>The transcriptional landscape of the mammalian genome.</title>
        <authorList>
            <person name="Carninci P."/>
            <person name="Kasukawa T."/>
            <person name="Katayama S."/>
            <person name="Gough J."/>
            <person name="Frith M.C."/>
            <person name="Maeda N."/>
            <person name="Oyama R."/>
            <person name="Ravasi T."/>
            <person name="Lenhard B."/>
            <person name="Wells C."/>
            <person name="Kodzius R."/>
            <person name="Shimokawa K."/>
            <person name="Bajic V.B."/>
            <person name="Brenner S.E."/>
            <person name="Batalov S."/>
            <person name="Forrest A.R."/>
            <person name="Zavolan M."/>
            <person name="Davis M.J."/>
            <person name="Wilming L.G."/>
            <person name="Aidinis V."/>
            <person name="Allen J.E."/>
            <person name="Ambesi-Impiombato A."/>
            <person name="Apweiler R."/>
            <person name="Aturaliya R.N."/>
            <person name="Bailey T.L."/>
            <person name="Bansal M."/>
            <person name="Baxter L."/>
            <person name="Beisel K.W."/>
            <person name="Bersano T."/>
            <person name="Bono H."/>
            <person name="Chalk A.M."/>
            <person name="Chiu K.P."/>
            <person name="Choudhary V."/>
            <person name="Christoffels A."/>
            <person name="Clutterbuck D.R."/>
            <person name="Crowe M.L."/>
            <person name="Dalla E."/>
            <person name="Dalrymple B.P."/>
            <person name="de Bono B."/>
            <person name="Della Gatta G."/>
            <person name="di Bernardo D."/>
            <person name="Down T."/>
            <person name="Engstrom P."/>
            <person name="Fagiolini M."/>
            <person name="Faulkner G."/>
            <person name="Fletcher C.F."/>
            <person name="Fukushima T."/>
            <person name="Furuno M."/>
            <person name="Futaki S."/>
            <person name="Gariboldi M."/>
            <person name="Georgii-Hemming P."/>
            <person name="Gingeras T.R."/>
            <person name="Gojobori T."/>
            <person name="Green R.E."/>
            <person name="Gustincich S."/>
            <person name="Harbers M."/>
            <person name="Hayashi Y."/>
            <person name="Hensch T.K."/>
            <person name="Hirokawa N."/>
            <person name="Hill D."/>
            <person name="Huminiecki L."/>
            <person name="Iacono M."/>
            <person name="Ikeo K."/>
            <person name="Iwama A."/>
            <person name="Ishikawa T."/>
            <person name="Jakt M."/>
            <person name="Kanapin A."/>
            <person name="Katoh M."/>
            <person name="Kawasawa Y."/>
            <person name="Kelso J."/>
            <person name="Kitamura H."/>
            <person name="Kitano H."/>
            <person name="Kollias G."/>
            <person name="Krishnan S.P."/>
            <person name="Kruger A."/>
            <person name="Kummerfeld S.K."/>
            <person name="Kurochkin I.V."/>
            <person name="Lareau L.F."/>
            <person name="Lazarevic D."/>
            <person name="Lipovich L."/>
            <person name="Liu J."/>
            <person name="Liuni S."/>
            <person name="McWilliam S."/>
            <person name="Madan Babu M."/>
            <person name="Madera M."/>
            <person name="Marchionni L."/>
            <person name="Matsuda H."/>
            <person name="Matsuzawa S."/>
            <person name="Miki H."/>
            <person name="Mignone F."/>
            <person name="Miyake S."/>
            <person name="Morris K."/>
            <person name="Mottagui-Tabar S."/>
            <person name="Mulder N."/>
            <person name="Nakano N."/>
            <person name="Nakauchi H."/>
            <person name="Ng P."/>
            <person name="Nilsson R."/>
            <person name="Nishiguchi S."/>
            <person name="Nishikawa S."/>
            <person name="Nori F."/>
            <person name="Ohara O."/>
            <person name="Okazaki Y."/>
            <person name="Orlando V."/>
            <person name="Pang K.C."/>
            <person name="Pavan W.J."/>
            <person name="Pavesi G."/>
            <person name="Pesole G."/>
            <person name="Petrovsky N."/>
            <person name="Piazza S."/>
            <person name="Reed J."/>
            <person name="Reid J.F."/>
            <person name="Ring B.Z."/>
            <person name="Ringwald M."/>
            <person name="Rost B."/>
            <person name="Ruan Y."/>
            <person name="Salzberg S.L."/>
            <person name="Sandelin A."/>
            <person name="Schneider C."/>
            <person name="Schoenbach C."/>
            <person name="Sekiguchi K."/>
            <person name="Semple C.A."/>
            <person name="Seno S."/>
            <person name="Sessa L."/>
            <person name="Sheng Y."/>
            <person name="Shibata Y."/>
            <person name="Shimada H."/>
            <person name="Shimada K."/>
            <person name="Silva D."/>
            <person name="Sinclair B."/>
            <person name="Sperling S."/>
            <person name="Stupka E."/>
            <person name="Sugiura K."/>
            <person name="Sultana R."/>
            <person name="Takenaka Y."/>
            <person name="Taki K."/>
            <person name="Tammoja K."/>
            <person name="Tan S.L."/>
            <person name="Tang S."/>
            <person name="Taylor M.S."/>
            <person name="Tegner J."/>
            <person name="Teichmann S.A."/>
            <person name="Ueda H.R."/>
            <person name="van Nimwegen E."/>
            <person name="Verardo R."/>
            <person name="Wei C.L."/>
            <person name="Yagi K."/>
            <person name="Yamanishi H."/>
            <person name="Zabarovsky E."/>
            <person name="Zhu S."/>
            <person name="Zimmer A."/>
            <person name="Hide W."/>
            <person name="Bult C."/>
            <person name="Grimmond S.M."/>
            <person name="Teasdale R.D."/>
            <person name="Liu E.T."/>
            <person name="Brusic V."/>
            <person name="Quackenbush J."/>
            <person name="Wahlestedt C."/>
            <person name="Mattick J.S."/>
            <person name="Hume D.A."/>
            <person name="Kai C."/>
            <person name="Sasaki D."/>
            <person name="Tomaru Y."/>
            <person name="Fukuda S."/>
            <person name="Kanamori-Katayama M."/>
            <person name="Suzuki M."/>
            <person name="Aoki J."/>
            <person name="Arakawa T."/>
            <person name="Iida J."/>
            <person name="Imamura K."/>
            <person name="Itoh M."/>
            <person name="Kato T."/>
            <person name="Kawaji H."/>
            <person name="Kawagashira N."/>
            <person name="Kawashima T."/>
            <person name="Kojima M."/>
            <person name="Kondo S."/>
            <person name="Konno H."/>
            <person name="Nakano K."/>
            <person name="Ninomiya N."/>
            <person name="Nishio T."/>
            <person name="Okada M."/>
            <person name="Plessy C."/>
            <person name="Shibata K."/>
            <person name="Shiraki T."/>
            <person name="Suzuki S."/>
            <person name="Tagami M."/>
            <person name="Waki K."/>
            <person name="Watahiki A."/>
            <person name="Okamura-Oho Y."/>
            <person name="Suzuki H."/>
            <person name="Kawai J."/>
            <person name="Hayashizaki Y."/>
        </authorList>
    </citation>
    <scope>NUCLEOTIDE SEQUENCE [LARGE SCALE MRNA]</scope>
    <source>
        <strain>C57BL/6J</strain>
        <tissue>Bone marrow</tissue>
        <tissue>Lung</tissue>
    </source>
</reference>
<reference key="2">
    <citation type="journal article" date="2004" name="Genome Res.">
        <title>The status, quality, and expansion of the NIH full-length cDNA project: the Mammalian Gene Collection (MGC).</title>
        <authorList>
            <consortium name="The MGC Project Team"/>
        </authorList>
    </citation>
    <scope>NUCLEOTIDE SEQUENCE [LARGE SCALE MRNA]</scope>
    <source>
        <strain>FVB/N</strain>
        <tissue>Mammary tumor</tissue>
    </source>
</reference>
<reference key="3">
    <citation type="journal article" date="2010" name="Cell">
        <title>A tissue-specific atlas of mouse protein phosphorylation and expression.</title>
        <authorList>
            <person name="Huttlin E.L."/>
            <person name="Jedrychowski M.P."/>
            <person name="Elias J.E."/>
            <person name="Goswami T."/>
            <person name="Rad R."/>
            <person name="Beausoleil S.A."/>
            <person name="Villen J."/>
            <person name="Haas W."/>
            <person name="Sowa M.E."/>
            <person name="Gygi S.P."/>
        </authorList>
    </citation>
    <scope>IDENTIFICATION BY MASS SPECTROMETRY [LARGE SCALE ANALYSIS]</scope>
    <source>
        <tissue>Lung</tissue>
        <tissue>Spleen</tissue>
    </source>
</reference>
<proteinExistence type="evidence at protein level"/>
<feature type="signal peptide" evidence="1">
    <location>
        <begin position="1"/>
        <end position="19"/>
    </location>
</feature>
<feature type="chain" id="PRO_0000232513" description="Solute carrier family 66 member 3">
    <location>
        <begin position="20"/>
        <end position="202"/>
    </location>
</feature>
<feature type="transmembrane region" description="Helical" evidence="1">
    <location>
        <begin position="33"/>
        <end position="53"/>
    </location>
</feature>
<feature type="transmembrane region" description="Helical" evidence="1">
    <location>
        <begin position="64"/>
        <end position="84"/>
    </location>
</feature>
<feature type="transmembrane region" description="Helical" evidence="1">
    <location>
        <begin position="94"/>
        <end position="114"/>
    </location>
</feature>
<feature type="transmembrane region" description="Helical" evidence="1">
    <location>
        <begin position="171"/>
        <end position="191"/>
    </location>
</feature>
<feature type="sequence conflict" description="In Ref. 2; AAH25220." evidence="2" ref="2">
    <original>A</original>
    <variation>V</variation>
    <location>
        <position position="198"/>
    </location>
</feature>
<dbReference type="EMBL" id="AK053171">
    <property type="protein sequence ID" value="BAC35293.1"/>
    <property type="molecule type" value="mRNA"/>
</dbReference>
<dbReference type="EMBL" id="AK150094">
    <property type="protein sequence ID" value="BAE29302.1"/>
    <property type="molecule type" value="mRNA"/>
</dbReference>
<dbReference type="EMBL" id="BC025220">
    <property type="protein sequence ID" value="AAH25220.1"/>
    <property type="molecule type" value="mRNA"/>
</dbReference>
<dbReference type="CCDS" id="CCDS25824.1"/>
<dbReference type="RefSeq" id="NP_766162.2">
    <property type="nucleotide sequence ID" value="NM_172574.2"/>
</dbReference>
<dbReference type="SMR" id="Q8C6U2"/>
<dbReference type="BioGRID" id="229914">
    <property type="interactions" value="2"/>
</dbReference>
<dbReference type="FunCoup" id="Q8C6U2">
    <property type="interactions" value="617"/>
</dbReference>
<dbReference type="STRING" id="10090.ENSMUSP00000054462"/>
<dbReference type="TCDB" id="2.A.43.3.2">
    <property type="family name" value="the lysosomal cystine transporter (lct) family"/>
</dbReference>
<dbReference type="PaxDb" id="10090-ENSMUSP00000054462"/>
<dbReference type="PeptideAtlas" id="Q8C6U2"/>
<dbReference type="ProteomicsDB" id="291737"/>
<dbReference type="Pumba" id="Q8C6U2"/>
<dbReference type="Antibodypedia" id="74460">
    <property type="antibodies" value="27 antibodies from 6 providers"/>
</dbReference>
<dbReference type="Ensembl" id="ENSMUST00000054536.11">
    <property type="protein sequence ID" value="ENSMUSP00000054462.5"/>
    <property type="gene ID" value="ENSMUSG00000045679.15"/>
</dbReference>
<dbReference type="GeneID" id="217430"/>
<dbReference type="KEGG" id="mmu:217430"/>
<dbReference type="UCSC" id="uc007nck.2">
    <property type="organism name" value="mouse"/>
</dbReference>
<dbReference type="AGR" id="MGI:2444067"/>
<dbReference type="CTD" id="130814"/>
<dbReference type="MGI" id="MGI:2444067">
    <property type="gene designation" value="Slc66a3"/>
</dbReference>
<dbReference type="VEuPathDB" id="HostDB:ENSMUSG00000045679"/>
<dbReference type="eggNOG" id="KOG3211">
    <property type="taxonomic scope" value="Eukaryota"/>
</dbReference>
<dbReference type="GeneTree" id="ENSGT00940000153916"/>
<dbReference type="HOGENOM" id="CLU_053568_3_2_1"/>
<dbReference type="InParanoid" id="Q8C6U2"/>
<dbReference type="OMA" id="YALIYYA"/>
<dbReference type="OrthoDB" id="271506at2759"/>
<dbReference type="PhylomeDB" id="Q8C6U2"/>
<dbReference type="TreeFam" id="TF324895"/>
<dbReference type="BioGRID-ORCS" id="217430">
    <property type="hits" value="2 hits in 79 CRISPR screens"/>
</dbReference>
<dbReference type="ChiTaRS" id="Pqlc3">
    <property type="organism name" value="mouse"/>
</dbReference>
<dbReference type="PRO" id="PR:Q8C6U2"/>
<dbReference type="Proteomes" id="UP000000589">
    <property type="component" value="Chromosome 12"/>
</dbReference>
<dbReference type="RNAct" id="Q8C6U2">
    <property type="molecule type" value="protein"/>
</dbReference>
<dbReference type="Bgee" id="ENSMUSG00000045679">
    <property type="expression patterns" value="Expressed in olfactory epithelium and 180 other cell types or tissues"/>
</dbReference>
<dbReference type="ExpressionAtlas" id="Q8C6U2">
    <property type="expression patterns" value="baseline and differential"/>
</dbReference>
<dbReference type="GO" id="GO:0016020">
    <property type="term" value="C:membrane"/>
    <property type="evidence" value="ECO:0007669"/>
    <property type="project" value="UniProtKB-SubCell"/>
</dbReference>
<dbReference type="Gene3D" id="1.20.1280.290">
    <property type="match status" value="2"/>
</dbReference>
<dbReference type="InterPro" id="IPR016817">
    <property type="entry name" value="MannP-dilichol_defect-1"/>
</dbReference>
<dbReference type="InterPro" id="IPR006603">
    <property type="entry name" value="PQ-loop_rpt"/>
</dbReference>
<dbReference type="PANTHER" id="PTHR12226">
    <property type="entry name" value="MANNOSE-P-DOLICHOL UTILIZATION DEFECT 1 LEC35 -RELATED"/>
    <property type="match status" value="1"/>
</dbReference>
<dbReference type="PANTHER" id="PTHR12226:SF3">
    <property type="entry name" value="SOLUTE CARRIER FAMILY 66 MEMBER 3"/>
    <property type="match status" value="1"/>
</dbReference>
<dbReference type="Pfam" id="PF04193">
    <property type="entry name" value="PQ-loop"/>
    <property type="match status" value="1"/>
</dbReference>
<dbReference type="PIRSF" id="PIRSF023381">
    <property type="entry name" value="MannP-dilichol_defect-1p"/>
    <property type="match status" value="1"/>
</dbReference>
<protein>
    <recommendedName>
        <fullName evidence="2">Solute carrier family 66 member 3</fullName>
    </recommendedName>
    <alternativeName>
        <fullName>PQ-loop repeat-containing protein 3</fullName>
    </alternativeName>
</protein>
<gene>
    <name type="primary">Slc66a3</name>
    <name type="synonym">Pqlc3</name>
</gene>
<comment type="subcellular location">
    <subcellularLocation>
        <location evidence="2">Membrane</location>
        <topology evidence="2">Multi-pass membrane protein</topology>
    </subcellularLocation>
</comment>